<organism>
    <name type="scientific">Neisseria meningitidis serogroup C (strain 053442)</name>
    <dbReference type="NCBI Taxonomy" id="374833"/>
    <lineage>
        <taxon>Bacteria</taxon>
        <taxon>Pseudomonadati</taxon>
        <taxon>Pseudomonadota</taxon>
        <taxon>Betaproteobacteria</taxon>
        <taxon>Neisseriales</taxon>
        <taxon>Neisseriaceae</taxon>
        <taxon>Neisseria</taxon>
    </lineage>
</organism>
<keyword id="KW-0028">Amino-acid biosynthesis</keyword>
<keyword id="KW-0963">Cytoplasm</keyword>
<keyword id="KW-0220">Diaminopimelate biosynthesis</keyword>
<keyword id="KW-0457">Lysine biosynthesis</keyword>
<keyword id="KW-0520">NAD</keyword>
<keyword id="KW-0521">NADP</keyword>
<keyword id="KW-0560">Oxidoreductase</keyword>
<gene>
    <name evidence="1" type="primary">dapB</name>
    <name type="ordered locus">NMCC_1945</name>
</gene>
<name>DAPB_NEIM0</name>
<sequence length="269" mass="28268">MTPLKIAIAGANGRMGRVLVEAVNNHPDTVLSGALEHSGSEALGLDAGYAVGLKTGIAISDDVDAVLAQSDVLIDFTRPEPTLKHLQKCVEKQVNIIIGTTGFDDAGKAAIHTAAEQTGIVFAANFSVGVNLTFHILDTVARVLNEGYDIEIIEGHHRHKVDAPSGTALRMGEVIAGALGRDLKQCAVYGREGHTGPRDPSTIGFATVRAGDIVGDHTALFATDGERVEITHKAGSRMTFAAGAVRAAVWVNGKTGLYDMQDVLGLNNR</sequence>
<accession>A9M3H7</accession>
<proteinExistence type="inferred from homology"/>
<feature type="chain" id="PRO_1000075683" description="4-hydroxy-tetrahydrodipicolinate reductase">
    <location>
        <begin position="1"/>
        <end position="269"/>
    </location>
</feature>
<feature type="active site" description="Proton donor/acceptor" evidence="1">
    <location>
        <position position="156"/>
    </location>
</feature>
<feature type="active site" description="Proton donor" evidence="1">
    <location>
        <position position="160"/>
    </location>
</feature>
<feature type="binding site" evidence="1">
    <location>
        <begin position="10"/>
        <end position="15"/>
    </location>
    <ligand>
        <name>NAD(+)</name>
        <dbReference type="ChEBI" id="CHEBI:57540"/>
    </ligand>
</feature>
<feature type="binding site" evidence="1">
    <location>
        <position position="36"/>
    </location>
    <ligand>
        <name>NAD(+)</name>
        <dbReference type="ChEBI" id="CHEBI:57540"/>
    </ligand>
</feature>
<feature type="binding site" evidence="1">
    <location>
        <begin position="99"/>
        <end position="101"/>
    </location>
    <ligand>
        <name>NAD(+)</name>
        <dbReference type="ChEBI" id="CHEBI:57540"/>
    </ligand>
</feature>
<feature type="binding site" evidence="1">
    <location>
        <begin position="123"/>
        <end position="126"/>
    </location>
    <ligand>
        <name>NAD(+)</name>
        <dbReference type="ChEBI" id="CHEBI:57540"/>
    </ligand>
</feature>
<feature type="binding site" evidence="1">
    <location>
        <position position="157"/>
    </location>
    <ligand>
        <name>(S)-2,3,4,5-tetrahydrodipicolinate</name>
        <dbReference type="ChEBI" id="CHEBI:16845"/>
    </ligand>
</feature>
<feature type="binding site" evidence="1">
    <location>
        <begin position="166"/>
        <end position="167"/>
    </location>
    <ligand>
        <name>(S)-2,3,4,5-tetrahydrodipicolinate</name>
        <dbReference type="ChEBI" id="CHEBI:16845"/>
    </ligand>
</feature>
<reference key="1">
    <citation type="journal article" date="2008" name="Genomics">
        <title>Characterization of ST-4821 complex, a unique Neisseria meningitidis clone.</title>
        <authorList>
            <person name="Peng J."/>
            <person name="Yang L."/>
            <person name="Yang F."/>
            <person name="Yang J."/>
            <person name="Yan Y."/>
            <person name="Nie H."/>
            <person name="Zhang X."/>
            <person name="Xiong Z."/>
            <person name="Jiang Y."/>
            <person name="Cheng F."/>
            <person name="Xu X."/>
            <person name="Chen S."/>
            <person name="Sun L."/>
            <person name="Li W."/>
            <person name="Shen Y."/>
            <person name="Shao Z."/>
            <person name="Liang X."/>
            <person name="Xu J."/>
            <person name="Jin Q."/>
        </authorList>
    </citation>
    <scope>NUCLEOTIDE SEQUENCE [LARGE SCALE GENOMIC DNA]</scope>
    <source>
        <strain>053442</strain>
    </source>
</reference>
<dbReference type="EC" id="1.17.1.8" evidence="1"/>
<dbReference type="EMBL" id="CP000381">
    <property type="protein sequence ID" value="ABX74071.1"/>
    <property type="molecule type" value="Genomic_DNA"/>
</dbReference>
<dbReference type="RefSeq" id="WP_002228897.1">
    <property type="nucleotide sequence ID" value="NC_010120.1"/>
</dbReference>
<dbReference type="SMR" id="A9M3H7"/>
<dbReference type="KEGG" id="nmn:NMCC_1945"/>
<dbReference type="HOGENOM" id="CLU_047479_2_1_4"/>
<dbReference type="UniPathway" id="UPA00034">
    <property type="reaction ID" value="UER00018"/>
</dbReference>
<dbReference type="Proteomes" id="UP000001177">
    <property type="component" value="Chromosome"/>
</dbReference>
<dbReference type="GO" id="GO:0005829">
    <property type="term" value="C:cytosol"/>
    <property type="evidence" value="ECO:0007669"/>
    <property type="project" value="TreeGrafter"/>
</dbReference>
<dbReference type="GO" id="GO:0008839">
    <property type="term" value="F:4-hydroxy-tetrahydrodipicolinate reductase"/>
    <property type="evidence" value="ECO:0007669"/>
    <property type="project" value="UniProtKB-EC"/>
</dbReference>
<dbReference type="GO" id="GO:0051287">
    <property type="term" value="F:NAD binding"/>
    <property type="evidence" value="ECO:0007669"/>
    <property type="project" value="UniProtKB-UniRule"/>
</dbReference>
<dbReference type="GO" id="GO:0050661">
    <property type="term" value="F:NADP binding"/>
    <property type="evidence" value="ECO:0007669"/>
    <property type="project" value="UniProtKB-UniRule"/>
</dbReference>
<dbReference type="GO" id="GO:0016726">
    <property type="term" value="F:oxidoreductase activity, acting on CH or CH2 groups, NAD or NADP as acceptor"/>
    <property type="evidence" value="ECO:0007669"/>
    <property type="project" value="UniProtKB-UniRule"/>
</dbReference>
<dbReference type="GO" id="GO:0019877">
    <property type="term" value="P:diaminopimelate biosynthetic process"/>
    <property type="evidence" value="ECO:0007669"/>
    <property type="project" value="UniProtKB-UniRule"/>
</dbReference>
<dbReference type="GO" id="GO:0009089">
    <property type="term" value="P:lysine biosynthetic process via diaminopimelate"/>
    <property type="evidence" value="ECO:0007669"/>
    <property type="project" value="UniProtKB-UniRule"/>
</dbReference>
<dbReference type="CDD" id="cd02274">
    <property type="entry name" value="DHDPR_N"/>
    <property type="match status" value="1"/>
</dbReference>
<dbReference type="FunFam" id="3.30.360.10:FF:000004">
    <property type="entry name" value="4-hydroxy-tetrahydrodipicolinate reductase"/>
    <property type="match status" value="1"/>
</dbReference>
<dbReference type="FunFam" id="3.40.50.720:FF:000048">
    <property type="entry name" value="4-hydroxy-tetrahydrodipicolinate reductase"/>
    <property type="match status" value="1"/>
</dbReference>
<dbReference type="Gene3D" id="3.30.360.10">
    <property type="entry name" value="Dihydrodipicolinate Reductase, domain 2"/>
    <property type="match status" value="1"/>
</dbReference>
<dbReference type="Gene3D" id="3.40.50.720">
    <property type="entry name" value="NAD(P)-binding Rossmann-like Domain"/>
    <property type="match status" value="1"/>
</dbReference>
<dbReference type="HAMAP" id="MF_00102">
    <property type="entry name" value="DapB"/>
    <property type="match status" value="1"/>
</dbReference>
<dbReference type="InterPro" id="IPR022663">
    <property type="entry name" value="DapB_C"/>
</dbReference>
<dbReference type="InterPro" id="IPR000846">
    <property type="entry name" value="DapB_N"/>
</dbReference>
<dbReference type="InterPro" id="IPR022664">
    <property type="entry name" value="DapB_N_CS"/>
</dbReference>
<dbReference type="InterPro" id="IPR023940">
    <property type="entry name" value="DHDPR_bac"/>
</dbReference>
<dbReference type="InterPro" id="IPR036291">
    <property type="entry name" value="NAD(P)-bd_dom_sf"/>
</dbReference>
<dbReference type="NCBIfam" id="TIGR00036">
    <property type="entry name" value="dapB"/>
    <property type="match status" value="1"/>
</dbReference>
<dbReference type="PANTHER" id="PTHR20836:SF0">
    <property type="entry name" value="4-HYDROXY-TETRAHYDRODIPICOLINATE REDUCTASE 1, CHLOROPLASTIC-RELATED"/>
    <property type="match status" value="1"/>
</dbReference>
<dbReference type="PANTHER" id="PTHR20836">
    <property type="entry name" value="DIHYDRODIPICOLINATE REDUCTASE"/>
    <property type="match status" value="1"/>
</dbReference>
<dbReference type="Pfam" id="PF05173">
    <property type="entry name" value="DapB_C"/>
    <property type="match status" value="1"/>
</dbReference>
<dbReference type="Pfam" id="PF01113">
    <property type="entry name" value="DapB_N"/>
    <property type="match status" value="1"/>
</dbReference>
<dbReference type="PIRSF" id="PIRSF000161">
    <property type="entry name" value="DHPR"/>
    <property type="match status" value="1"/>
</dbReference>
<dbReference type="SUPFAM" id="SSF55347">
    <property type="entry name" value="Glyceraldehyde-3-phosphate dehydrogenase-like, C-terminal domain"/>
    <property type="match status" value="1"/>
</dbReference>
<dbReference type="SUPFAM" id="SSF51735">
    <property type="entry name" value="NAD(P)-binding Rossmann-fold domains"/>
    <property type="match status" value="1"/>
</dbReference>
<dbReference type="PROSITE" id="PS01298">
    <property type="entry name" value="DAPB"/>
    <property type="match status" value="1"/>
</dbReference>
<protein>
    <recommendedName>
        <fullName evidence="1">4-hydroxy-tetrahydrodipicolinate reductase</fullName>
        <shortName evidence="1">HTPA reductase</shortName>
        <ecNumber evidence="1">1.17.1.8</ecNumber>
    </recommendedName>
</protein>
<evidence type="ECO:0000255" key="1">
    <source>
        <dbReference type="HAMAP-Rule" id="MF_00102"/>
    </source>
</evidence>
<evidence type="ECO:0000305" key="2"/>
<comment type="function">
    <text evidence="1">Catalyzes the conversion of 4-hydroxy-tetrahydrodipicolinate (HTPA) to tetrahydrodipicolinate.</text>
</comment>
<comment type="catalytic activity">
    <reaction evidence="1">
        <text>(S)-2,3,4,5-tetrahydrodipicolinate + NAD(+) + H2O = (2S,4S)-4-hydroxy-2,3,4,5-tetrahydrodipicolinate + NADH + H(+)</text>
        <dbReference type="Rhea" id="RHEA:35323"/>
        <dbReference type="ChEBI" id="CHEBI:15377"/>
        <dbReference type="ChEBI" id="CHEBI:15378"/>
        <dbReference type="ChEBI" id="CHEBI:16845"/>
        <dbReference type="ChEBI" id="CHEBI:57540"/>
        <dbReference type="ChEBI" id="CHEBI:57945"/>
        <dbReference type="ChEBI" id="CHEBI:67139"/>
        <dbReference type="EC" id="1.17.1.8"/>
    </reaction>
</comment>
<comment type="catalytic activity">
    <reaction evidence="1">
        <text>(S)-2,3,4,5-tetrahydrodipicolinate + NADP(+) + H2O = (2S,4S)-4-hydroxy-2,3,4,5-tetrahydrodipicolinate + NADPH + H(+)</text>
        <dbReference type="Rhea" id="RHEA:35331"/>
        <dbReference type="ChEBI" id="CHEBI:15377"/>
        <dbReference type="ChEBI" id="CHEBI:15378"/>
        <dbReference type="ChEBI" id="CHEBI:16845"/>
        <dbReference type="ChEBI" id="CHEBI:57783"/>
        <dbReference type="ChEBI" id="CHEBI:58349"/>
        <dbReference type="ChEBI" id="CHEBI:67139"/>
        <dbReference type="EC" id="1.17.1.8"/>
    </reaction>
</comment>
<comment type="pathway">
    <text evidence="1">Amino-acid biosynthesis; L-lysine biosynthesis via DAP pathway; (S)-tetrahydrodipicolinate from L-aspartate: step 4/4.</text>
</comment>
<comment type="subcellular location">
    <subcellularLocation>
        <location evidence="1">Cytoplasm</location>
    </subcellularLocation>
</comment>
<comment type="similarity">
    <text evidence="1">Belongs to the DapB family.</text>
</comment>
<comment type="caution">
    <text evidence="2">Was originally thought to be a dihydrodipicolinate reductase (DHDPR), catalyzing the conversion of dihydrodipicolinate to tetrahydrodipicolinate. However, it was shown in E.coli that the substrate of the enzymatic reaction is not dihydrodipicolinate (DHDP) but in fact (2S,4S)-4-hydroxy-2,3,4,5-tetrahydrodipicolinic acid (HTPA), the product released by the DapA-catalyzed reaction.</text>
</comment>